<gene>
    <name evidence="1" type="primary">hisB</name>
    <name type="ordered locus">Tcr_1966</name>
</gene>
<comment type="catalytic activity">
    <reaction evidence="1">
        <text>D-erythro-1-(imidazol-4-yl)glycerol 3-phosphate = 3-(imidazol-4-yl)-2-oxopropyl phosphate + H2O</text>
        <dbReference type="Rhea" id="RHEA:11040"/>
        <dbReference type="ChEBI" id="CHEBI:15377"/>
        <dbReference type="ChEBI" id="CHEBI:57766"/>
        <dbReference type="ChEBI" id="CHEBI:58278"/>
        <dbReference type="EC" id="4.2.1.19"/>
    </reaction>
</comment>
<comment type="pathway">
    <text evidence="1">Amino-acid biosynthesis; L-histidine biosynthesis; L-histidine from 5-phospho-alpha-D-ribose 1-diphosphate: step 6/9.</text>
</comment>
<comment type="subcellular location">
    <subcellularLocation>
        <location evidence="1">Cytoplasm</location>
    </subcellularLocation>
</comment>
<comment type="similarity">
    <text evidence="1">Belongs to the imidazoleglycerol-phosphate dehydratase family.</text>
</comment>
<reference key="1">
    <citation type="journal article" date="2006" name="PLoS Biol.">
        <title>The genome of deep-sea vent chemolithoautotroph Thiomicrospira crunogena XCL-2.</title>
        <authorList>
            <person name="Scott K.M."/>
            <person name="Sievert S.M."/>
            <person name="Abril F.N."/>
            <person name="Ball L.A."/>
            <person name="Barrett C.J."/>
            <person name="Blake R.A."/>
            <person name="Boller A.J."/>
            <person name="Chain P.S.G."/>
            <person name="Clark J.A."/>
            <person name="Davis C.R."/>
            <person name="Detter C."/>
            <person name="Do K.F."/>
            <person name="Dobrinski K.P."/>
            <person name="Faza B.I."/>
            <person name="Fitzpatrick K.A."/>
            <person name="Freyermuth S.K."/>
            <person name="Harmer T.L."/>
            <person name="Hauser L.J."/>
            <person name="Huegler M."/>
            <person name="Kerfeld C.A."/>
            <person name="Klotz M.G."/>
            <person name="Kong W.W."/>
            <person name="Land M."/>
            <person name="Lapidus A."/>
            <person name="Larimer F.W."/>
            <person name="Longo D.L."/>
            <person name="Lucas S."/>
            <person name="Malfatti S.A."/>
            <person name="Massey S.E."/>
            <person name="Martin D.D."/>
            <person name="McCuddin Z."/>
            <person name="Meyer F."/>
            <person name="Moore J.L."/>
            <person name="Ocampo L.H. Jr."/>
            <person name="Paul J.H."/>
            <person name="Paulsen I.T."/>
            <person name="Reep D.K."/>
            <person name="Ren Q."/>
            <person name="Ross R.L."/>
            <person name="Sato P.Y."/>
            <person name="Thomas P."/>
            <person name="Tinkham L.E."/>
            <person name="Zeruth G.T."/>
        </authorList>
    </citation>
    <scope>NUCLEOTIDE SEQUENCE [LARGE SCALE GENOMIC DNA]</scope>
    <source>
        <strain>DSM 25203 / XCL-2</strain>
    </source>
</reference>
<sequence>MRQATIQRNTLETKIELSVNLDGTGKADLNTGVPFLEHMLDQIARHGLIDLTIKADGDTHIDDHHTVEDIGISLGMALKEAVGDKKGIKRYGHSYVPLDEALSRVVIDLSGRPGLVFKADFTRASIGGFDTELVAEFFQGFTNHAQATLHIDCLRGKNAHHQAETIFKAFGRALRMALEADERMADQLPSTKGAL</sequence>
<dbReference type="EC" id="4.2.1.19" evidence="1"/>
<dbReference type="EMBL" id="CP000109">
    <property type="protein sequence ID" value="ABB42556.1"/>
    <property type="molecule type" value="Genomic_DNA"/>
</dbReference>
<dbReference type="SMR" id="Q31E67"/>
<dbReference type="STRING" id="317025.Tcr_1966"/>
<dbReference type="KEGG" id="tcx:Tcr_1966"/>
<dbReference type="eggNOG" id="COG0131">
    <property type="taxonomic scope" value="Bacteria"/>
</dbReference>
<dbReference type="HOGENOM" id="CLU_044308_2_0_6"/>
<dbReference type="OrthoDB" id="9790411at2"/>
<dbReference type="UniPathway" id="UPA00031">
    <property type="reaction ID" value="UER00011"/>
</dbReference>
<dbReference type="GO" id="GO:0005737">
    <property type="term" value="C:cytoplasm"/>
    <property type="evidence" value="ECO:0007669"/>
    <property type="project" value="UniProtKB-SubCell"/>
</dbReference>
<dbReference type="GO" id="GO:0004424">
    <property type="term" value="F:imidazoleglycerol-phosphate dehydratase activity"/>
    <property type="evidence" value="ECO:0007669"/>
    <property type="project" value="UniProtKB-UniRule"/>
</dbReference>
<dbReference type="GO" id="GO:0000105">
    <property type="term" value="P:L-histidine biosynthetic process"/>
    <property type="evidence" value="ECO:0007669"/>
    <property type="project" value="UniProtKB-UniRule"/>
</dbReference>
<dbReference type="CDD" id="cd07914">
    <property type="entry name" value="IGPD"/>
    <property type="match status" value="1"/>
</dbReference>
<dbReference type="FunFam" id="3.30.230.40:FF:000001">
    <property type="entry name" value="Imidazoleglycerol-phosphate dehydratase HisB"/>
    <property type="match status" value="1"/>
</dbReference>
<dbReference type="FunFam" id="3.30.230.40:FF:000003">
    <property type="entry name" value="Imidazoleglycerol-phosphate dehydratase HisB"/>
    <property type="match status" value="1"/>
</dbReference>
<dbReference type="Gene3D" id="3.30.230.40">
    <property type="entry name" value="Imidazole glycerol phosphate dehydratase, domain 1"/>
    <property type="match status" value="2"/>
</dbReference>
<dbReference type="HAMAP" id="MF_00076">
    <property type="entry name" value="HisB"/>
    <property type="match status" value="1"/>
</dbReference>
<dbReference type="InterPro" id="IPR038494">
    <property type="entry name" value="IGPD_sf"/>
</dbReference>
<dbReference type="InterPro" id="IPR000807">
    <property type="entry name" value="ImidazoleglycerolP_deHydtase"/>
</dbReference>
<dbReference type="InterPro" id="IPR020565">
    <property type="entry name" value="ImidazoleglycerP_deHydtase_CS"/>
</dbReference>
<dbReference type="InterPro" id="IPR020568">
    <property type="entry name" value="Ribosomal_Su5_D2-typ_SF"/>
</dbReference>
<dbReference type="NCBIfam" id="NF002106">
    <property type="entry name" value="PRK00951.1-1"/>
    <property type="match status" value="1"/>
</dbReference>
<dbReference type="NCBIfam" id="NF002109">
    <property type="entry name" value="PRK00951.1-5"/>
    <property type="match status" value="1"/>
</dbReference>
<dbReference type="NCBIfam" id="NF002111">
    <property type="entry name" value="PRK00951.2-1"/>
    <property type="match status" value="1"/>
</dbReference>
<dbReference type="NCBIfam" id="NF002114">
    <property type="entry name" value="PRK00951.2-4"/>
    <property type="match status" value="1"/>
</dbReference>
<dbReference type="PANTHER" id="PTHR23133:SF2">
    <property type="entry name" value="IMIDAZOLEGLYCEROL-PHOSPHATE DEHYDRATASE"/>
    <property type="match status" value="1"/>
</dbReference>
<dbReference type="PANTHER" id="PTHR23133">
    <property type="entry name" value="IMIDAZOLEGLYCEROL-PHOSPHATE DEHYDRATASE HIS7"/>
    <property type="match status" value="1"/>
</dbReference>
<dbReference type="Pfam" id="PF00475">
    <property type="entry name" value="IGPD"/>
    <property type="match status" value="1"/>
</dbReference>
<dbReference type="SUPFAM" id="SSF54211">
    <property type="entry name" value="Ribosomal protein S5 domain 2-like"/>
    <property type="match status" value="2"/>
</dbReference>
<dbReference type="PROSITE" id="PS00954">
    <property type="entry name" value="IGP_DEHYDRATASE_1"/>
    <property type="match status" value="1"/>
</dbReference>
<dbReference type="PROSITE" id="PS00955">
    <property type="entry name" value="IGP_DEHYDRATASE_2"/>
    <property type="match status" value="1"/>
</dbReference>
<protein>
    <recommendedName>
        <fullName evidence="1">Imidazoleglycerol-phosphate dehydratase</fullName>
        <shortName evidence="1">IGPD</shortName>
        <ecNumber evidence="1">4.2.1.19</ecNumber>
    </recommendedName>
</protein>
<organism>
    <name type="scientific">Hydrogenovibrio crunogenus (strain DSM 25203 / XCL-2)</name>
    <name type="common">Thiomicrospira crunogena</name>
    <dbReference type="NCBI Taxonomy" id="317025"/>
    <lineage>
        <taxon>Bacteria</taxon>
        <taxon>Pseudomonadati</taxon>
        <taxon>Pseudomonadota</taxon>
        <taxon>Gammaproteobacteria</taxon>
        <taxon>Thiotrichales</taxon>
        <taxon>Piscirickettsiaceae</taxon>
        <taxon>Hydrogenovibrio</taxon>
    </lineage>
</organism>
<name>HIS7_HYDCU</name>
<feature type="chain" id="PRO_0000336355" description="Imidazoleglycerol-phosphate dehydratase">
    <location>
        <begin position="1"/>
        <end position="195"/>
    </location>
</feature>
<accession>Q31E67</accession>
<evidence type="ECO:0000255" key="1">
    <source>
        <dbReference type="HAMAP-Rule" id="MF_00076"/>
    </source>
</evidence>
<keyword id="KW-0028">Amino-acid biosynthesis</keyword>
<keyword id="KW-0963">Cytoplasm</keyword>
<keyword id="KW-0368">Histidine biosynthesis</keyword>
<keyword id="KW-0456">Lyase</keyword>
<proteinExistence type="inferred from homology"/>